<name>MMCO_MYCTU</name>
<comment type="function">
    <text evidence="4">Required for copper resistance. In vitro, oxidizes organic substrates and Fe(2+). May act in vivo by oxidation of toxic periplasmic Cu(+).</text>
</comment>
<comment type="catalytic activity">
    <reaction evidence="4">
        <text>4 Fe(2+) + O2 + 4 H(+) = 4 Fe(3+) + 2 H2O</text>
        <dbReference type="Rhea" id="RHEA:11148"/>
        <dbReference type="ChEBI" id="CHEBI:15377"/>
        <dbReference type="ChEBI" id="CHEBI:15378"/>
        <dbReference type="ChEBI" id="CHEBI:15379"/>
        <dbReference type="ChEBI" id="CHEBI:29033"/>
        <dbReference type="ChEBI" id="CHEBI:29034"/>
        <dbReference type="EC" id="1.16.3.1"/>
    </reaction>
</comment>
<comment type="cofactor">
    <cofactor evidence="1">
        <name>Cu cation</name>
        <dbReference type="ChEBI" id="CHEBI:23378"/>
    </cofactor>
    <text evidence="1">Binds 4 Cu cations per monomer.</text>
</comment>
<comment type="subcellular location">
    <subcellularLocation>
        <location evidence="4">Cell inner membrane</location>
        <topology evidence="4">Peripheral membrane protein</topology>
        <orientation evidence="4">Periplasmic side</orientation>
    </subcellularLocation>
    <subcellularLocation>
        <location evidence="4">Periplasm</location>
    </subcellularLocation>
    <text evidence="4">Could be associated with the membrane through a lipidation site.</text>
</comment>
<comment type="induction">
    <text evidence="4 5">Repressed by RicR (PubMed:24549843). Induced by copper (PubMed:23772064, PubMed:24549843).</text>
</comment>
<comment type="PTM">
    <text evidence="3">Predicted to be exported by the Tat system. The position of the signal peptide cleavage has not been experimentally proven.</text>
</comment>
<comment type="disruption phenotype">
    <text evidence="4 5">Mutant is more sensitive to copper (PubMed:23772064, PubMed:24549843). Deletion does not affect virulence in mice (PubMed:24549843).</text>
</comment>
<comment type="miscellaneous">
    <text evidence="5">Overexpression results in copper hyperresistance but not hypervirulence.</text>
</comment>
<comment type="similarity">
    <text evidence="7">Belongs to the multicopper oxidase family.</text>
</comment>
<evidence type="ECO:0000250" key="1">
    <source>
        <dbReference type="UniProtKB" id="Q70KY3"/>
    </source>
</evidence>
<evidence type="ECO:0000255" key="2"/>
<evidence type="ECO:0000255" key="3">
    <source>
        <dbReference type="PROSITE-ProRule" id="PRU00648"/>
    </source>
</evidence>
<evidence type="ECO:0000269" key="4">
    <source>
    </source>
</evidence>
<evidence type="ECO:0000269" key="5">
    <source>
    </source>
</evidence>
<evidence type="ECO:0000303" key="6">
    <source>
    </source>
</evidence>
<evidence type="ECO:0000305" key="7"/>
<evidence type="ECO:0000312" key="8">
    <source>
        <dbReference type="EMBL" id="AFN48726.1"/>
    </source>
</evidence>
<evidence type="ECO:0000312" key="9">
    <source>
        <dbReference type="EMBL" id="CCP43594.1"/>
    </source>
</evidence>
<evidence type="ECO:0000312" key="10">
    <source>
        <dbReference type="EMBL" id="KBJ39045.1"/>
    </source>
</evidence>
<protein>
    <recommendedName>
        <fullName evidence="7">Multicopper oxidase MmcO</fullName>
        <ecNumber evidence="4">1.16.3.1</ecNumber>
    </recommendedName>
    <alternativeName>
        <fullName evidence="6">Mycobacterium multicopper oxidase</fullName>
    </alternativeName>
</protein>
<accession>I6WZK7</accession>
<proteinExistence type="evidence at protein level"/>
<feature type="signal peptide" description="Tat-type signal" evidence="3">
    <location>
        <begin position="1"/>
        <end position="44"/>
    </location>
</feature>
<feature type="chain" id="PRO_0000433098" description="Multicopper oxidase MmcO" evidence="3">
    <location>
        <begin position="45"/>
        <end position="504"/>
    </location>
</feature>
<feature type="domain" description="Plastocyanin-like" evidence="2">
    <location>
        <begin position="190"/>
        <end position="349"/>
    </location>
</feature>
<feature type="binding site" evidence="1">
    <location>
        <position position="120"/>
    </location>
    <ligand>
        <name>Cu cation</name>
        <dbReference type="ChEBI" id="CHEBI:23378"/>
        <label>1</label>
    </ligand>
</feature>
<feature type="binding site" evidence="1">
    <location>
        <position position="122"/>
    </location>
    <ligand>
        <name>Cu cation</name>
        <dbReference type="ChEBI" id="CHEBI:23378"/>
        <label>2</label>
    </ligand>
</feature>
<feature type="binding site" evidence="1">
    <location>
        <position position="161"/>
    </location>
    <ligand>
        <name>Cu cation</name>
        <dbReference type="ChEBI" id="CHEBI:23378"/>
        <label>2</label>
    </ligand>
</feature>
<feature type="binding site" evidence="1">
    <location>
        <position position="163"/>
    </location>
    <ligand>
        <name>Cu cation</name>
        <dbReference type="ChEBI" id="CHEBI:23378"/>
        <label>3</label>
    </ligand>
</feature>
<feature type="binding site" evidence="1">
    <location>
        <position position="437"/>
    </location>
    <ligand>
        <name>Cu cation</name>
        <dbReference type="ChEBI" id="CHEBI:23378"/>
        <label>4</label>
    </ligand>
</feature>
<feature type="binding site" evidence="1">
    <location>
        <position position="440"/>
    </location>
    <ligand>
        <name>Cu cation</name>
        <dbReference type="ChEBI" id="CHEBI:23378"/>
        <label>1</label>
    </ligand>
</feature>
<feature type="binding site" evidence="1">
    <location>
        <position position="442"/>
    </location>
    <ligand>
        <name>Cu cation</name>
        <dbReference type="ChEBI" id="CHEBI:23378"/>
        <label>3</label>
    </ligand>
</feature>
<feature type="binding site" evidence="1">
    <location>
        <position position="485"/>
    </location>
    <ligand>
        <name>Cu cation</name>
        <dbReference type="ChEBI" id="CHEBI:23378"/>
        <label>3</label>
    </ligand>
</feature>
<feature type="binding site" evidence="1">
    <location>
        <position position="486"/>
    </location>
    <ligand>
        <name>Cu cation</name>
        <dbReference type="ChEBI" id="CHEBI:23378"/>
        <label>4</label>
    </ligand>
</feature>
<feature type="binding site" evidence="1">
    <location>
        <position position="487"/>
    </location>
    <ligand>
        <name>Cu cation</name>
        <dbReference type="ChEBI" id="CHEBI:23378"/>
        <label>2</label>
    </ligand>
</feature>
<feature type="binding site" evidence="1">
    <location>
        <position position="491"/>
    </location>
    <ligand>
        <name>Cu cation</name>
        <dbReference type="ChEBI" id="CHEBI:23378"/>
        <label>4</label>
    </ligand>
</feature>
<feature type="mutagenesis site" description="Slight decrease in activity." evidence="4">
    <original>C</original>
    <variation>A</variation>
    <location>
        <position position="35"/>
    </location>
</feature>
<feature type="mutagenesis site" description="Lack of activity." evidence="4">
    <original>C</original>
    <variation>A</variation>
    <location>
        <position position="486"/>
    </location>
</feature>
<reference key="1">
    <citation type="journal article" date="1998" name="Nature">
        <title>Deciphering the biology of Mycobacterium tuberculosis from the complete genome sequence.</title>
        <authorList>
            <person name="Cole S.T."/>
            <person name="Brosch R."/>
            <person name="Parkhill J."/>
            <person name="Garnier T."/>
            <person name="Churcher C.M."/>
            <person name="Harris D.E."/>
            <person name="Gordon S.V."/>
            <person name="Eiglmeier K."/>
            <person name="Gas S."/>
            <person name="Barry C.E. III"/>
            <person name="Tekaia F."/>
            <person name="Badcock K."/>
            <person name="Basham D."/>
            <person name="Brown D."/>
            <person name="Chillingworth T."/>
            <person name="Connor R."/>
            <person name="Davies R.M."/>
            <person name="Devlin K."/>
            <person name="Feltwell T."/>
            <person name="Gentles S."/>
            <person name="Hamlin N."/>
            <person name="Holroyd S."/>
            <person name="Hornsby T."/>
            <person name="Jagels K."/>
            <person name="Krogh A."/>
            <person name="McLean J."/>
            <person name="Moule S."/>
            <person name="Murphy L.D."/>
            <person name="Oliver S."/>
            <person name="Osborne J."/>
            <person name="Quail M.A."/>
            <person name="Rajandream M.A."/>
            <person name="Rogers J."/>
            <person name="Rutter S."/>
            <person name="Seeger K."/>
            <person name="Skelton S."/>
            <person name="Squares S."/>
            <person name="Squares R."/>
            <person name="Sulston J.E."/>
            <person name="Taylor K."/>
            <person name="Whitehead S."/>
            <person name="Barrell B.G."/>
        </authorList>
    </citation>
    <scope>NUCLEOTIDE SEQUENCE [LARGE SCALE GENOMIC DNA]</scope>
    <source>
        <strain>ATCC 25618 / H37Rv</strain>
    </source>
</reference>
<reference key="2">
    <citation type="submission" date="2013-11" db="EMBL/GenBank/DDBJ databases">
        <title>The genome sequence of Mycobacterium tuberculosis H37Rv.</title>
        <authorList>
            <consortium name="The Broad Institute Genome Sequencing Platform"/>
            <person name="Galagan J."/>
            <person name="Kreiswirth B."/>
            <person name="Dobos K."/>
            <person name="Fortune S."/>
            <person name="Fitzgerald M."/>
            <person name="Young S.K."/>
            <person name="Zeng Q."/>
            <person name="Gargeya S."/>
            <person name="Abouelleil A."/>
            <person name="Alvarado L."/>
            <person name="Berlin A.M."/>
            <person name="Chapman S.B."/>
            <person name="Gainer-Dewar J."/>
            <person name="Goldberg J."/>
            <person name="Gnerre S."/>
            <person name="Griggs A."/>
            <person name="Gujja S."/>
            <person name="Hansen M."/>
            <person name="Howarth C."/>
            <person name="Imamovic A."/>
            <person name="Larimer J."/>
            <person name="McCowan C."/>
            <person name="Murphy C."/>
            <person name="Pearson M."/>
            <person name="Poon T."/>
            <person name="Priest M."/>
            <person name="Roberts A."/>
            <person name="Saif S."/>
            <person name="Shea T."/>
            <person name="Sykes S."/>
            <person name="Wortman J."/>
            <person name="Nusbaum C."/>
            <person name="Birren B."/>
        </authorList>
    </citation>
    <scope>NUCLEOTIDE SEQUENCE [LARGE SCALE GENOMIC DNA]</scope>
    <source>
        <strain>ATCC 25618 / H37Rv</strain>
    </source>
</reference>
<reference key="3">
    <citation type="submission" date="2014-04" db="EMBL/GenBank/DDBJ databases">
        <title>The genome sequence of Mycobacterium tuberculosis H37Rv.</title>
        <authorList>
            <consortium name="The Broad Institute Genomics Platform"/>
            <consortium name="The Broad Institute Genome Sequencing Center for Infectious Disease"/>
            <person name="Earl A.M."/>
            <person name="Kreiswirth B."/>
            <person name="Gomez J."/>
            <person name="Victor T."/>
            <person name="Desjardins C."/>
            <person name="Abeel T."/>
            <person name="Young S."/>
            <person name="Zeng Q."/>
            <person name="Gargeya S."/>
            <person name="Abouelleil A."/>
            <person name="Alvarado L."/>
            <person name="Chapman S.B."/>
            <person name="Gainer-Dewar J."/>
            <person name="Goldberg J."/>
            <person name="Griggs A."/>
            <person name="Gujja S."/>
            <person name="Hansen M."/>
            <person name="Howarth C."/>
            <person name="Imamovic A."/>
            <person name="Larimer J."/>
            <person name="Murphy C."/>
            <person name="Naylor J."/>
            <person name="Pearson M."/>
            <person name="Poon T.W."/>
            <person name="Priest M."/>
            <person name="Roberts A."/>
            <person name="Saif S."/>
            <person name="Shea T."/>
            <person name="Sykes S."/>
            <person name="Wortman J."/>
            <person name="Nusbaum C."/>
            <person name="Birren B."/>
        </authorList>
    </citation>
    <scope>NUCLEOTIDE SEQUENCE [LARGE SCALE GENOMIC DNA]</scope>
    <source>
        <strain>ATCC 25618 / H37Rv</strain>
    </source>
</reference>
<reference key="4">
    <citation type="journal article" date="2011" name="Mol. Cell. Proteomics">
        <title>Proteogenomic analysis of Mycobacterium tuberculosis by high resolution mass spectrometry.</title>
        <authorList>
            <person name="Kelkar D.S."/>
            <person name="Kumar D."/>
            <person name="Kumar P."/>
            <person name="Balakrishnan L."/>
            <person name="Muthusamy B."/>
            <person name="Yadav A.K."/>
            <person name="Shrivastava P."/>
            <person name="Marimuthu A."/>
            <person name="Anand S."/>
            <person name="Sundaram H."/>
            <person name="Kingsbury R."/>
            <person name="Harsha H.C."/>
            <person name="Nair B."/>
            <person name="Prasad T.S."/>
            <person name="Chauhan D.S."/>
            <person name="Katoch K."/>
            <person name="Katoch V.M."/>
            <person name="Kumar P."/>
            <person name="Chaerkady R."/>
            <person name="Ramachandran S."/>
            <person name="Dash D."/>
            <person name="Pandey A."/>
        </authorList>
    </citation>
    <scope>IDENTIFICATION BY MASS SPECTROMETRY [LARGE SCALE ANALYSIS]</scope>
    <source>
        <strain>ATCC 25618 / H37Rv</strain>
    </source>
</reference>
<reference key="5">
    <citation type="journal article" date="2013" name="J. Bacteriol.">
        <title>A multicopper oxidase is required for copper resistance in Mycobacterium tuberculosis.</title>
        <authorList>
            <person name="Rowland J.L."/>
            <person name="Niederweis M."/>
        </authorList>
    </citation>
    <scope>FUNCTION</scope>
    <scope>CATALYTIC ACTIVITY</scope>
    <scope>SUBCELLULAR LOCATION</scope>
    <scope>INDUCTION</scope>
    <scope>DISRUPTION PHENOTYPE</scope>
    <scope>MUTAGENESIS OF CYS-35 AND CYS-486</scope>
    <source>
        <strain>ATCC 25618 / H37Rv</strain>
    </source>
</reference>
<reference key="6">
    <citation type="journal article" date="2014" name="MBio">
        <title>The copper-responsive RicR regulon contributes to Mycobacterium tuberculosis virulence.</title>
        <authorList>
            <person name="Shi X."/>
            <person name="Festa R.A."/>
            <person name="Ioerger T.R."/>
            <person name="Butler-Wu S."/>
            <person name="Sacchettini J.C."/>
            <person name="Darwin K.H."/>
            <person name="Samanovic M.I."/>
        </authorList>
    </citation>
    <scope>INDUCTION</scope>
    <scope>DISRUPTION PHENOTYPE</scope>
    <scope>OVEREXPRESSION</scope>
    <source>
        <strain>ATCC 25618 / H37Rv</strain>
    </source>
</reference>
<organism>
    <name type="scientific">Mycobacterium tuberculosis (strain ATCC 25618 / H37Rv)</name>
    <dbReference type="NCBI Taxonomy" id="83332"/>
    <lineage>
        <taxon>Bacteria</taxon>
        <taxon>Bacillati</taxon>
        <taxon>Actinomycetota</taxon>
        <taxon>Actinomycetes</taxon>
        <taxon>Mycobacteriales</taxon>
        <taxon>Mycobacteriaceae</taxon>
        <taxon>Mycobacterium</taxon>
        <taxon>Mycobacterium tuberculosis complex</taxon>
    </lineage>
</organism>
<keyword id="KW-0997">Cell inner membrane</keyword>
<keyword id="KW-1003">Cell membrane</keyword>
<keyword id="KW-0186">Copper</keyword>
<keyword id="KW-0472">Membrane</keyword>
<keyword id="KW-0479">Metal-binding</keyword>
<keyword id="KW-0560">Oxidoreductase</keyword>
<keyword id="KW-0574">Periplasm</keyword>
<keyword id="KW-1185">Reference proteome</keyword>
<keyword id="KW-0732">Signal</keyword>
<sequence length="504" mass="53796">MPELATSGNAFDKRRFSRRGFLGAGIASGFALAACASKPTASGAAGMTAAIDAAEAARPHSGRTVTATLTPQPARIDLGGPIVSTLTYGNTIPGPLIRATVGDEIVVSVTNRLGDPTSVHWHGIALRNDMDGTEPATANIGPGGDFTYRFSVPDPGTYWAHPHVGLQGDHGLYLPVVVDDPTEPGHYDAEWIIILDDWTDGIGKSPQQLYGELTDPNKPTMQNTTGMPEGEGVDSNLLGGDGGDIAYPYYLINGRIPVAATSFKAKPGQRIRIRIINSAADTAFRIALAGHSMTVTHTDGYPVIPTEVDALLIGMAERYDVMVTAAGGVFPLVALAEGKNALARALLSTGAGSPPDPQFRPDELNWRVGTVEMFTAATTANLGRPEPTHDLPVTLGGTMAKYDWTINGEPYSTTNPLHVRLGQRPTLMFDNTTMMYHPIHLHGHTFQMIKADGSPGARKDTVIVLPKQKMRAVLVADNPGVWVMHCHNNYHQVAGMATRLDYIL</sequence>
<dbReference type="EC" id="1.16.3.1" evidence="4"/>
<dbReference type="EMBL" id="AL123456">
    <property type="protein sequence ID" value="CCP43594.1"/>
    <property type="molecule type" value="Genomic_DNA"/>
</dbReference>
<dbReference type="EMBL" id="CP003248">
    <property type="protein sequence ID" value="AFN48726.1"/>
    <property type="molecule type" value="Genomic_DNA"/>
</dbReference>
<dbReference type="EMBL" id="JLDD01000008">
    <property type="protein sequence ID" value="KBJ39045.1"/>
    <property type="molecule type" value="Genomic_DNA"/>
</dbReference>
<dbReference type="RefSeq" id="NP_215361.1">
    <property type="nucleotide sequence ID" value="NC_000962.3"/>
</dbReference>
<dbReference type="RefSeq" id="WP_003404392.1">
    <property type="nucleotide sequence ID" value="NZ_NVQJ01000040.1"/>
</dbReference>
<dbReference type="SMR" id="I6WZK7"/>
<dbReference type="FunCoup" id="I6WZK7">
    <property type="interactions" value="5"/>
</dbReference>
<dbReference type="STRING" id="83332.Rv0846c"/>
<dbReference type="PaxDb" id="83332-Rv0846c"/>
<dbReference type="DNASU" id="885207"/>
<dbReference type="GeneID" id="885207"/>
<dbReference type="KEGG" id="mtu:Rv0846c"/>
<dbReference type="KEGG" id="mtv:RVBD_0846c"/>
<dbReference type="PATRIC" id="fig|83332.111.peg.938"/>
<dbReference type="TubercuList" id="Rv0846c"/>
<dbReference type="eggNOG" id="COG2132">
    <property type="taxonomic scope" value="Bacteria"/>
</dbReference>
<dbReference type="HOGENOM" id="CLU_009100_6_0_11"/>
<dbReference type="InParanoid" id="I6WZK7"/>
<dbReference type="OrthoDB" id="345021at2"/>
<dbReference type="PhylomeDB" id="I6WZK7"/>
<dbReference type="BRENDA" id="1.16.3.1">
    <property type="organism ID" value="3445"/>
</dbReference>
<dbReference type="Proteomes" id="UP000001584">
    <property type="component" value="Chromosome"/>
</dbReference>
<dbReference type="GO" id="GO:0042597">
    <property type="term" value="C:periplasmic space"/>
    <property type="evidence" value="ECO:0007669"/>
    <property type="project" value="UniProtKB-SubCell"/>
</dbReference>
<dbReference type="GO" id="GO:0005886">
    <property type="term" value="C:plasma membrane"/>
    <property type="evidence" value="ECO:0007669"/>
    <property type="project" value="UniProtKB-SubCell"/>
</dbReference>
<dbReference type="GO" id="GO:0005507">
    <property type="term" value="F:copper ion binding"/>
    <property type="evidence" value="ECO:0007669"/>
    <property type="project" value="InterPro"/>
</dbReference>
<dbReference type="GO" id="GO:0004322">
    <property type="term" value="F:ferroxidase activity"/>
    <property type="evidence" value="ECO:0007669"/>
    <property type="project" value="UniProtKB-EC"/>
</dbReference>
<dbReference type="CDD" id="cd13861">
    <property type="entry name" value="CuRO_1_CumA_like"/>
    <property type="match status" value="1"/>
</dbReference>
<dbReference type="CDD" id="cd13870">
    <property type="entry name" value="CuRO_2_CopA_like_1"/>
    <property type="match status" value="1"/>
</dbReference>
<dbReference type="CDD" id="cd13896">
    <property type="entry name" value="CuRO_3_CopA"/>
    <property type="match status" value="1"/>
</dbReference>
<dbReference type="Gene3D" id="2.60.40.420">
    <property type="entry name" value="Cupredoxins - blue copper proteins"/>
    <property type="match status" value="3"/>
</dbReference>
<dbReference type="InterPro" id="IPR011707">
    <property type="entry name" value="Cu-oxidase-like_N"/>
</dbReference>
<dbReference type="InterPro" id="IPR001117">
    <property type="entry name" value="Cu-oxidase_2nd"/>
</dbReference>
<dbReference type="InterPro" id="IPR011706">
    <property type="entry name" value="Cu-oxidase_C"/>
</dbReference>
<dbReference type="InterPro" id="IPR045087">
    <property type="entry name" value="Cu-oxidase_fam"/>
</dbReference>
<dbReference type="InterPro" id="IPR033138">
    <property type="entry name" value="Cu_oxidase_CS"/>
</dbReference>
<dbReference type="InterPro" id="IPR002355">
    <property type="entry name" value="Cu_oxidase_Cu_BS"/>
</dbReference>
<dbReference type="InterPro" id="IPR008972">
    <property type="entry name" value="Cupredoxin"/>
</dbReference>
<dbReference type="InterPro" id="IPR034279">
    <property type="entry name" value="CuRO_3_CopA"/>
</dbReference>
<dbReference type="InterPro" id="IPR006311">
    <property type="entry name" value="TAT_signal"/>
</dbReference>
<dbReference type="PANTHER" id="PTHR11709:SF394">
    <property type="entry name" value="FI03373P-RELATED"/>
    <property type="match status" value="1"/>
</dbReference>
<dbReference type="PANTHER" id="PTHR11709">
    <property type="entry name" value="MULTI-COPPER OXIDASE"/>
    <property type="match status" value="1"/>
</dbReference>
<dbReference type="Pfam" id="PF00394">
    <property type="entry name" value="Cu-oxidase"/>
    <property type="match status" value="1"/>
</dbReference>
<dbReference type="Pfam" id="PF07731">
    <property type="entry name" value="Cu-oxidase_2"/>
    <property type="match status" value="1"/>
</dbReference>
<dbReference type="Pfam" id="PF07732">
    <property type="entry name" value="Cu-oxidase_3"/>
    <property type="match status" value="1"/>
</dbReference>
<dbReference type="SUPFAM" id="SSF49503">
    <property type="entry name" value="Cupredoxins"/>
    <property type="match status" value="3"/>
</dbReference>
<dbReference type="PROSITE" id="PS00079">
    <property type="entry name" value="MULTICOPPER_OXIDASE1"/>
    <property type="match status" value="1"/>
</dbReference>
<dbReference type="PROSITE" id="PS00080">
    <property type="entry name" value="MULTICOPPER_OXIDASE2"/>
    <property type="match status" value="1"/>
</dbReference>
<dbReference type="PROSITE" id="PS51318">
    <property type="entry name" value="TAT"/>
    <property type="match status" value="1"/>
</dbReference>
<gene>
    <name evidence="6" type="primary">mmcO</name>
    <name evidence="9" type="ordered locus">Rv0846c</name>
    <name evidence="8" type="ordered locus">RVBD_0846c</name>
    <name evidence="10" type="ORF">P425_00886</name>
</gene>